<accession>B8ECE1</accession>
<proteinExistence type="inferred from homology"/>
<protein>
    <recommendedName>
        <fullName evidence="1">Formate--tetrahydrofolate ligase</fullName>
        <ecNumber evidence="1">6.3.4.3</ecNumber>
    </recommendedName>
    <alternativeName>
        <fullName evidence="1">Formyltetrahydrofolate synthetase</fullName>
        <shortName evidence="1">FHS</shortName>
        <shortName evidence="1">FTHFS</shortName>
    </alternativeName>
</protein>
<name>FTHS_SHEB2</name>
<sequence length="580" mass="60863">MLTDMDISSRASLKNITELGADLGLLPEEMMLFGHTKAKVELSVLQRLAGQRKGKLIIVTAVTPTPHGEGKTVTSIGLTQSLNAIGQKACACIRQPSMGPVFGVKGGAAGGGYAQVVPMQEMNLHLTGDIHAVSSAHNLGAAAIAARLFHEARLGKTEFEAQSGQAFLDIAPNEIRWHRVVDHNDRCLRQIHVGLGDNNGPEYGSSFDITAASELMAILALSHDLADMRARIGRLVLALNTQGQVITAEDLGVAGAMTAIMADAIKPTLMQTLNGSPCLIHSGPFANIAHGNSSIIADDIALRLADFVVTEGGFGSDMGFEKFCNIKVRQSGQAPAAAVLVTTLKALKANSGLATEVDSNAPNIHVPNINAPDQARLEAGFANLNWHINNVARYGIPVVVGINRFATDSDAELQWLMEAVNASAAFGCEISDAFSQGEAGAIALARTVVRAAETESQFKLLYPDEASLEAKLSTLAEVGYGASGVSLSIEAKQQAQQLTALGYGHLPLCMAKTPLSISHDPSLKGVPKDFVVPVRELVLHAGAGFITALVGNVMTMPGLGLKPGYLKIDIDAKGEIVGLG</sequence>
<reference key="1">
    <citation type="submission" date="2008-12" db="EMBL/GenBank/DDBJ databases">
        <title>Complete sequence of chromosome of Shewanella baltica OS223.</title>
        <authorList>
            <consortium name="US DOE Joint Genome Institute"/>
            <person name="Lucas S."/>
            <person name="Copeland A."/>
            <person name="Lapidus A."/>
            <person name="Glavina del Rio T."/>
            <person name="Dalin E."/>
            <person name="Tice H."/>
            <person name="Bruce D."/>
            <person name="Goodwin L."/>
            <person name="Pitluck S."/>
            <person name="Chertkov O."/>
            <person name="Meincke L."/>
            <person name="Brettin T."/>
            <person name="Detter J.C."/>
            <person name="Han C."/>
            <person name="Kuske C.R."/>
            <person name="Larimer F."/>
            <person name="Land M."/>
            <person name="Hauser L."/>
            <person name="Kyrpides N."/>
            <person name="Ovchinnikova G."/>
            <person name="Brettar I."/>
            <person name="Rodrigues J."/>
            <person name="Konstantinidis K."/>
            <person name="Tiedje J."/>
        </authorList>
    </citation>
    <scope>NUCLEOTIDE SEQUENCE [LARGE SCALE GENOMIC DNA]</scope>
    <source>
        <strain>OS223</strain>
    </source>
</reference>
<keyword id="KW-0067">ATP-binding</keyword>
<keyword id="KW-0436">Ligase</keyword>
<keyword id="KW-0547">Nucleotide-binding</keyword>
<keyword id="KW-0554">One-carbon metabolism</keyword>
<feature type="chain" id="PRO_1000185262" description="Formate--tetrahydrofolate ligase">
    <location>
        <begin position="1"/>
        <end position="580"/>
    </location>
</feature>
<feature type="binding site" evidence="1">
    <location>
        <begin position="65"/>
        <end position="72"/>
    </location>
    <ligand>
        <name>ATP</name>
        <dbReference type="ChEBI" id="CHEBI:30616"/>
    </ligand>
</feature>
<comment type="catalytic activity">
    <reaction evidence="1">
        <text>(6S)-5,6,7,8-tetrahydrofolate + formate + ATP = (6R)-10-formyltetrahydrofolate + ADP + phosphate</text>
        <dbReference type="Rhea" id="RHEA:20221"/>
        <dbReference type="ChEBI" id="CHEBI:15740"/>
        <dbReference type="ChEBI" id="CHEBI:30616"/>
        <dbReference type="ChEBI" id="CHEBI:43474"/>
        <dbReference type="ChEBI" id="CHEBI:57453"/>
        <dbReference type="ChEBI" id="CHEBI:195366"/>
        <dbReference type="ChEBI" id="CHEBI:456216"/>
        <dbReference type="EC" id="6.3.4.3"/>
    </reaction>
</comment>
<comment type="pathway">
    <text evidence="1">One-carbon metabolism; tetrahydrofolate interconversion.</text>
</comment>
<comment type="similarity">
    <text evidence="1">Belongs to the formate--tetrahydrofolate ligase family.</text>
</comment>
<dbReference type="EC" id="6.3.4.3" evidence="1"/>
<dbReference type="EMBL" id="CP001252">
    <property type="protein sequence ID" value="ACK48226.1"/>
    <property type="molecule type" value="Genomic_DNA"/>
</dbReference>
<dbReference type="RefSeq" id="WP_012588639.1">
    <property type="nucleotide sequence ID" value="NC_011663.1"/>
</dbReference>
<dbReference type="SMR" id="B8ECE1"/>
<dbReference type="KEGG" id="sbp:Sbal223_3748"/>
<dbReference type="HOGENOM" id="CLU_003601_3_3_6"/>
<dbReference type="UniPathway" id="UPA00193"/>
<dbReference type="Proteomes" id="UP000002507">
    <property type="component" value="Chromosome"/>
</dbReference>
<dbReference type="GO" id="GO:0005524">
    <property type="term" value="F:ATP binding"/>
    <property type="evidence" value="ECO:0007669"/>
    <property type="project" value="UniProtKB-UniRule"/>
</dbReference>
<dbReference type="GO" id="GO:0004329">
    <property type="term" value="F:formate-tetrahydrofolate ligase activity"/>
    <property type="evidence" value="ECO:0007669"/>
    <property type="project" value="UniProtKB-UniRule"/>
</dbReference>
<dbReference type="GO" id="GO:0035999">
    <property type="term" value="P:tetrahydrofolate interconversion"/>
    <property type="evidence" value="ECO:0007669"/>
    <property type="project" value="UniProtKB-UniRule"/>
</dbReference>
<dbReference type="FunFam" id="3.10.410.10:FF:000001">
    <property type="entry name" value="Putative formate--tetrahydrofolate ligase"/>
    <property type="match status" value="1"/>
</dbReference>
<dbReference type="Gene3D" id="3.30.1510.10">
    <property type="entry name" value="Domain 2, N(10)-formyltetrahydrofolate synthetase"/>
    <property type="match status" value="1"/>
</dbReference>
<dbReference type="Gene3D" id="3.10.410.10">
    <property type="entry name" value="Formyltetrahydrofolate synthetase, domain 3"/>
    <property type="match status" value="1"/>
</dbReference>
<dbReference type="Gene3D" id="3.40.50.300">
    <property type="entry name" value="P-loop containing nucleotide triphosphate hydrolases"/>
    <property type="match status" value="1"/>
</dbReference>
<dbReference type="HAMAP" id="MF_01543">
    <property type="entry name" value="FTHFS"/>
    <property type="match status" value="1"/>
</dbReference>
<dbReference type="InterPro" id="IPR000559">
    <property type="entry name" value="Formate_THF_ligase"/>
</dbReference>
<dbReference type="InterPro" id="IPR020628">
    <property type="entry name" value="Formate_THF_ligase_CS"/>
</dbReference>
<dbReference type="InterPro" id="IPR027417">
    <property type="entry name" value="P-loop_NTPase"/>
</dbReference>
<dbReference type="NCBIfam" id="NF010030">
    <property type="entry name" value="PRK13505.1"/>
    <property type="match status" value="1"/>
</dbReference>
<dbReference type="NCBIfam" id="NF010031">
    <property type="entry name" value="PRK13506.1"/>
    <property type="match status" value="1"/>
</dbReference>
<dbReference type="Pfam" id="PF01268">
    <property type="entry name" value="FTHFS"/>
    <property type="match status" value="1"/>
</dbReference>
<dbReference type="SUPFAM" id="SSF52540">
    <property type="entry name" value="P-loop containing nucleoside triphosphate hydrolases"/>
    <property type="match status" value="1"/>
</dbReference>
<dbReference type="PROSITE" id="PS00721">
    <property type="entry name" value="FTHFS_1"/>
    <property type="match status" value="1"/>
</dbReference>
<evidence type="ECO:0000255" key="1">
    <source>
        <dbReference type="HAMAP-Rule" id="MF_01543"/>
    </source>
</evidence>
<gene>
    <name evidence="1" type="primary">fhs</name>
    <name type="ordered locus">Sbal223_3748</name>
</gene>
<organism>
    <name type="scientific">Shewanella baltica (strain OS223)</name>
    <dbReference type="NCBI Taxonomy" id="407976"/>
    <lineage>
        <taxon>Bacteria</taxon>
        <taxon>Pseudomonadati</taxon>
        <taxon>Pseudomonadota</taxon>
        <taxon>Gammaproteobacteria</taxon>
        <taxon>Alteromonadales</taxon>
        <taxon>Shewanellaceae</taxon>
        <taxon>Shewanella</taxon>
    </lineage>
</organism>